<reference key="1">
    <citation type="journal article" date="2005" name="J. Biochem.">
        <title>A novel UbcH10-binding protein facilitates the ubiquitinylation of cyclin B in vitro.</title>
        <authorList>
            <person name="Kobirumaki F."/>
            <person name="Miyauchi Y."/>
            <person name="Fukami K."/>
            <person name="Tanaka H."/>
        </authorList>
    </citation>
    <scope>NUCLEOTIDE SEQUENCE [MRNA]</scope>
    <scope>INTERACTION WITH UBE2C AND CYCLIN-B</scope>
    <scope>FUNCTION</scope>
    <scope>CATALYTIC ACTIVITY</scope>
    <scope>PATHWAY</scope>
    <source>
        <tissue>Cervix carcinoma</tissue>
    </source>
</reference>
<reference key="2">
    <citation type="journal article" date="2004" name="Nat. Genet.">
        <title>Complete sequencing and characterization of 21,243 full-length human cDNAs.</title>
        <authorList>
            <person name="Ota T."/>
            <person name="Suzuki Y."/>
            <person name="Nishikawa T."/>
            <person name="Otsuki T."/>
            <person name="Sugiyama T."/>
            <person name="Irie R."/>
            <person name="Wakamatsu A."/>
            <person name="Hayashi K."/>
            <person name="Sato H."/>
            <person name="Nagai K."/>
            <person name="Kimura K."/>
            <person name="Makita H."/>
            <person name="Sekine M."/>
            <person name="Obayashi M."/>
            <person name="Nishi T."/>
            <person name="Shibahara T."/>
            <person name="Tanaka T."/>
            <person name="Ishii S."/>
            <person name="Yamamoto J."/>
            <person name="Saito K."/>
            <person name="Kawai Y."/>
            <person name="Isono Y."/>
            <person name="Nakamura Y."/>
            <person name="Nagahari K."/>
            <person name="Murakami K."/>
            <person name="Yasuda T."/>
            <person name="Iwayanagi T."/>
            <person name="Wagatsuma M."/>
            <person name="Shiratori A."/>
            <person name="Sudo H."/>
            <person name="Hosoiri T."/>
            <person name="Kaku Y."/>
            <person name="Kodaira H."/>
            <person name="Kondo H."/>
            <person name="Sugawara M."/>
            <person name="Takahashi M."/>
            <person name="Kanda K."/>
            <person name="Yokoi T."/>
            <person name="Furuya T."/>
            <person name="Kikkawa E."/>
            <person name="Omura Y."/>
            <person name="Abe K."/>
            <person name="Kamihara K."/>
            <person name="Katsuta N."/>
            <person name="Sato K."/>
            <person name="Tanikawa M."/>
            <person name="Yamazaki M."/>
            <person name="Ninomiya K."/>
            <person name="Ishibashi T."/>
            <person name="Yamashita H."/>
            <person name="Murakawa K."/>
            <person name="Fujimori K."/>
            <person name="Tanai H."/>
            <person name="Kimata M."/>
            <person name="Watanabe M."/>
            <person name="Hiraoka S."/>
            <person name="Chiba Y."/>
            <person name="Ishida S."/>
            <person name="Ono Y."/>
            <person name="Takiguchi S."/>
            <person name="Watanabe S."/>
            <person name="Yosida M."/>
            <person name="Hotuta T."/>
            <person name="Kusano J."/>
            <person name="Kanehori K."/>
            <person name="Takahashi-Fujii A."/>
            <person name="Hara H."/>
            <person name="Tanase T.-O."/>
            <person name="Nomura Y."/>
            <person name="Togiya S."/>
            <person name="Komai F."/>
            <person name="Hara R."/>
            <person name="Takeuchi K."/>
            <person name="Arita M."/>
            <person name="Imose N."/>
            <person name="Musashino K."/>
            <person name="Yuuki H."/>
            <person name="Oshima A."/>
            <person name="Sasaki N."/>
            <person name="Aotsuka S."/>
            <person name="Yoshikawa Y."/>
            <person name="Matsunawa H."/>
            <person name="Ichihara T."/>
            <person name="Shiohata N."/>
            <person name="Sano S."/>
            <person name="Moriya S."/>
            <person name="Momiyama H."/>
            <person name="Satoh N."/>
            <person name="Takami S."/>
            <person name="Terashima Y."/>
            <person name="Suzuki O."/>
            <person name="Nakagawa S."/>
            <person name="Senoh A."/>
            <person name="Mizoguchi H."/>
            <person name="Goto Y."/>
            <person name="Shimizu F."/>
            <person name="Wakebe H."/>
            <person name="Hishigaki H."/>
            <person name="Watanabe T."/>
            <person name="Sugiyama A."/>
            <person name="Takemoto M."/>
            <person name="Kawakami B."/>
            <person name="Yamazaki M."/>
            <person name="Watanabe K."/>
            <person name="Kumagai A."/>
            <person name="Itakura S."/>
            <person name="Fukuzumi Y."/>
            <person name="Fujimori Y."/>
            <person name="Komiyama M."/>
            <person name="Tashiro H."/>
            <person name="Tanigami A."/>
            <person name="Fujiwara T."/>
            <person name="Ono T."/>
            <person name="Yamada K."/>
            <person name="Fujii Y."/>
            <person name="Ozaki K."/>
            <person name="Hirao M."/>
            <person name="Ohmori Y."/>
            <person name="Kawabata A."/>
            <person name="Hikiji T."/>
            <person name="Kobatake N."/>
            <person name="Inagaki H."/>
            <person name="Ikema Y."/>
            <person name="Okamoto S."/>
            <person name="Okitani R."/>
            <person name="Kawakami T."/>
            <person name="Noguchi S."/>
            <person name="Itoh T."/>
            <person name="Shigeta K."/>
            <person name="Senba T."/>
            <person name="Matsumura K."/>
            <person name="Nakajima Y."/>
            <person name="Mizuno T."/>
            <person name="Morinaga M."/>
            <person name="Sasaki M."/>
            <person name="Togashi T."/>
            <person name="Oyama M."/>
            <person name="Hata H."/>
            <person name="Watanabe M."/>
            <person name="Komatsu T."/>
            <person name="Mizushima-Sugano J."/>
            <person name="Satoh T."/>
            <person name="Shirai Y."/>
            <person name="Takahashi Y."/>
            <person name="Nakagawa K."/>
            <person name="Okumura K."/>
            <person name="Nagase T."/>
            <person name="Nomura N."/>
            <person name="Kikuchi H."/>
            <person name="Masuho Y."/>
            <person name="Yamashita R."/>
            <person name="Nakai K."/>
            <person name="Yada T."/>
            <person name="Nakamura Y."/>
            <person name="Ohara O."/>
            <person name="Isogai T."/>
            <person name="Sugano S."/>
        </authorList>
    </citation>
    <scope>NUCLEOTIDE SEQUENCE [LARGE SCALE MRNA]</scope>
</reference>
<reference key="3">
    <citation type="journal article" date="2003" name="Nature">
        <title>The DNA sequence and analysis of human chromosome 6.</title>
        <authorList>
            <person name="Mungall A.J."/>
            <person name="Palmer S.A."/>
            <person name="Sims S.K."/>
            <person name="Edwards C.A."/>
            <person name="Ashurst J.L."/>
            <person name="Wilming L."/>
            <person name="Jones M.C."/>
            <person name="Horton R."/>
            <person name="Hunt S.E."/>
            <person name="Scott C.E."/>
            <person name="Gilbert J.G.R."/>
            <person name="Clamp M.E."/>
            <person name="Bethel G."/>
            <person name="Milne S."/>
            <person name="Ainscough R."/>
            <person name="Almeida J.P."/>
            <person name="Ambrose K.D."/>
            <person name="Andrews T.D."/>
            <person name="Ashwell R.I.S."/>
            <person name="Babbage A.K."/>
            <person name="Bagguley C.L."/>
            <person name="Bailey J."/>
            <person name="Banerjee R."/>
            <person name="Barker D.J."/>
            <person name="Barlow K.F."/>
            <person name="Bates K."/>
            <person name="Beare D.M."/>
            <person name="Beasley H."/>
            <person name="Beasley O."/>
            <person name="Bird C.P."/>
            <person name="Blakey S.E."/>
            <person name="Bray-Allen S."/>
            <person name="Brook J."/>
            <person name="Brown A.J."/>
            <person name="Brown J.Y."/>
            <person name="Burford D.C."/>
            <person name="Burrill W."/>
            <person name="Burton J."/>
            <person name="Carder C."/>
            <person name="Carter N.P."/>
            <person name="Chapman J.C."/>
            <person name="Clark S.Y."/>
            <person name="Clark G."/>
            <person name="Clee C.M."/>
            <person name="Clegg S."/>
            <person name="Cobley V."/>
            <person name="Collier R.E."/>
            <person name="Collins J.E."/>
            <person name="Colman L.K."/>
            <person name="Corby N.R."/>
            <person name="Coville G.J."/>
            <person name="Culley K.M."/>
            <person name="Dhami P."/>
            <person name="Davies J."/>
            <person name="Dunn M."/>
            <person name="Earthrowl M.E."/>
            <person name="Ellington A.E."/>
            <person name="Evans K.A."/>
            <person name="Faulkner L."/>
            <person name="Francis M.D."/>
            <person name="Frankish A."/>
            <person name="Frankland J."/>
            <person name="French L."/>
            <person name="Garner P."/>
            <person name="Garnett J."/>
            <person name="Ghori M.J."/>
            <person name="Gilby L.M."/>
            <person name="Gillson C.J."/>
            <person name="Glithero R.J."/>
            <person name="Grafham D.V."/>
            <person name="Grant M."/>
            <person name="Gribble S."/>
            <person name="Griffiths C."/>
            <person name="Griffiths M.N.D."/>
            <person name="Hall R."/>
            <person name="Halls K.S."/>
            <person name="Hammond S."/>
            <person name="Harley J.L."/>
            <person name="Hart E.A."/>
            <person name="Heath P.D."/>
            <person name="Heathcott R."/>
            <person name="Holmes S.J."/>
            <person name="Howden P.J."/>
            <person name="Howe K.L."/>
            <person name="Howell G.R."/>
            <person name="Huckle E."/>
            <person name="Humphray S.J."/>
            <person name="Humphries M.D."/>
            <person name="Hunt A.R."/>
            <person name="Johnson C.M."/>
            <person name="Joy A.A."/>
            <person name="Kay M."/>
            <person name="Keenan S.J."/>
            <person name="Kimberley A.M."/>
            <person name="King A."/>
            <person name="Laird G.K."/>
            <person name="Langford C."/>
            <person name="Lawlor S."/>
            <person name="Leongamornlert D.A."/>
            <person name="Leversha M."/>
            <person name="Lloyd C.R."/>
            <person name="Lloyd D.M."/>
            <person name="Loveland J.E."/>
            <person name="Lovell J."/>
            <person name="Martin S."/>
            <person name="Mashreghi-Mohammadi M."/>
            <person name="Maslen G.L."/>
            <person name="Matthews L."/>
            <person name="McCann O.T."/>
            <person name="McLaren S.J."/>
            <person name="McLay K."/>
            <person name="McMurray A."/>
            <person name="Moore M.J.F."/>
            <person name="Mullikin J.C."/>
            <person name="Niblett D."/>
            <person name="Nickerson T."/>
            <person name="Novik K.L."/>
            <person name="Oliver K."/>
            <person name="Overton-Larty E.K."/>
            <person name="Parker A."/>
            <person name="Patel R."/>
            <person name="Pearce A.V."/>
            <person name="Peck A.I."/>
            <person name="Phillimore B.J.C.T."/>
            <person name="Phillips S."/>
            <person name="Plumb R.W."/>
            <person name="Porter K.M."/>
            <person name="Ramsey Y."/>
            <person name="Ranby S.A."/>
            <person name="Rice C.M."/>
            <person name="Ross M.T."/>
            <person name="Searle S.M."/>
            <person name="Sehra H.K."/>
            <person name="Sheridan E."/>
            <person name="Skuce C.D."/>
            <person name="Smith S."/>
            <person name="Smith M."/>
            <person name="Spraggon L."/>
            <person name="Squares S.L."/>
            <person name="Steward C.A."/>
            <person name="Sycamore N."/>
            <person name="Tamlyn-Hall G."/>
            <person name="Tester J."/>
            <person name="Theaker A.J."/>
            <person name="Thomas D.W."/>
            <person name="Thorpe A."/>
            <person name="Tracey A."/>
            <person name="Tromans A."/>
            <person name="Tubby B."/>
            <person name="Wall M."/>
            <person name="Wallis J.M."/>
            <person name="West A.P."/>
            <person name="White S.S."/>
            <person name="Whitehead S.L."/>
            <person name="Whittaker H."/>
            <person name="Wild A."/>
            <person name="Willey D.J."/>
            <person name="Wilmer T.E."/>
            <person name="Wood J.M."/>
            <person name="Wray P.W."/>
            <person name="Wyatt J.C."/>
            <person name="Young L."/>
            <person name="Younger R.M."/>
            <person name="Bentley D.R."/>
            <person name="Coulson A."/>
            <person name="Durbin R.M."/>
            <person name="Hubbard T."/>
            <person name="Sulston J.E."/>
            <person name="Dunham I."/>
            <person name="Rogers J."/>
            <person name="Beck S."/>
        </authorList>
    </citation>
    <scope>NUCLEOTIDE SEQUENCE [LARGE SCALE GENOMIC DNA]</scope>
</reference>
<reference key="4">
    <citation type="submission" date="2005-09" db="EMBL/GenBank/DDBJ databases">
        <authorList>
            <person name="Mural R.J."/>
            <person name="Istrail S."/>
            <person name="Sutton G.G."/>
            <person name="Florea L."/>
            <person name="Halpern A.L."/>
            <person name="Mobarry C.M."/>
            <person name="Lippert R."/>
            <person name="Walenz B."/>
            <person name="Shatkay H."/>
            <person name="Dew I."/>
            <person name="Miller J.R."/>
            <person name="Flanigan M.J."/>
            <person name="Edwards N.J."/>
            <person name="Bolanos R."/>
            <person name="Fasulo D."/>
            <person name="Halldorsson B.V."/>
            <person name="Hannenhalli S."/>
            <person name="Turner R."/>
            <person name="Yooseph S."/>
            <person name="Lu F."/>
            <person name="Nusskern D.R."/>
            <person name="Shue B.C."/>
            <person name="Zheng X.H."/>
            <person name="Zhong F."/>
            <person name="Delcher A.L."/>
            <person name="Huson D.H."/>
            <person name="Kravitz S.A."/>
            <person name="Mouchard L."/>
            <person name="Reinert K."/>
            <person name="Remington K.A."/>
            <person name="Clark A.G."/>
            <person name="Waterman M.S."/>
            <person name="Eichler E.E."/>
            <person name="Adams M.D."/>
            <person name="Hunkapiller M.W."/>
            <person name="Myers E.W."/>
            <person name="Venter J.C."/>
        </authorList>
    </citation>
    <scope>NUCLEOTIDE SEQUENCE [LARGE SCALE GENOMIC DNA]</scope>
</reference>
<reference key="5">
    <citation type="journal article" date="2004" name="Genome Res.">
        <title>The status, quality, and expansion of the NIH full-length cDNA project: the Mammalian Gene Collection (MGC).</title>
        <authorList>
            <consortium name="The MGC Project Team"/>
        </authorList>
    </citation>
    <scope>NUCLEOTIDE SEQUENCE [LARGE SCALE MRNA]</scope>
    <source>
        <tissue>Blood</tissue>
        <tissue>Bone marrow</tissue>
    </source>
</reference>
<reference key="6">
    <citation type="journal article" date="2007" name="BMC Genomics">
        <title>The full-ORF clone resource of the German cDNA consortium.</title>
        <authorList>
            <person name="Bechtel S."/>
            <person name="Rosenfelder H."/>
            <person name="Duda A."/>
            <person name="Schmidt C.P."/>
            <person name="Ernst U."/>
            <person name="Wellenreuther R."/>
            <person name="Mehrle A."/>
            <person name="Schuster C."/>
            <person name="Bahr A."/>
            <person name="Bloecker H."/>
            <person name="Heubner D."/>
            <person name="Hoerlein A."/>
            <person name="Michel G."/>
            <person name="Wedler H."/>
            <person name="Koehrer K."/>
            <person name="Ottenwaelder B."/>
            <person name="Poustka A."/>
            <person name="Wiemann S."/>
            <person name="Schupp I."/>
        </authorList>
    </citation>
    <scope>NUCLEOTIDE SEQUENCE [LARGE SCALE MRNA] OF 45-226</scope>
    <source>
        <tissue>Testis</tissue>
    </source>
</reference>
<reference key="7">
    <citation type="journal article" date="2012" name="Proc. Natl. Acad. Sci. U.S.A.">
        <title>N-terminal acetylome analyses and functional insights of the N-terminal acetyltransferase NatB.</title>
        <authorList>
            <person name="Van Damme P."/>
            <person name="Lasa M."/>
            <person name="Polevoda B."/>
            <person name="Gazquez C."/>
            <person name="Elosegui-Artola A."/>
            <person name="Kim D.S."/>
            <person name="De Juan-Pardo E."/>
            <person name="Demeyer K."/>
            <person name="Hole K."/>
            <person name="Larrea E."/>
            <person name="Timmerman E."/>
            <person name="Prieto J."/>
            <person name="Arnesen T."/>
            <person name="Sherman F."/>
            <person name="Gevaert K."/>
            <person name="Aldabe R."/>
        </authorList>
    </citation>
    <scope>ACETYLATION [LARGE SCALE ANALYSIS] AT ALA-2</scope>
    <scope>CLEAVAGE OF INITIATOR METHIONINE [LARGE SCALE ANALYSIS]</scope>
    <scope>IDENTIFICATION BY MASS SPECTROMETRY [LARGE SCALE ANALYSIS]</scope>
</reference>
<reference key="8">
    <citation type="journal article" date="2024" name="Mol. Cell">
        <title>Cytoplasmic binding partners of the Integrator endonuclease INTS11 and its paralog CPSF73 are required for their nuclear function.</title>
        <authorList>
            <person name="Lin M.H."/>
            <person name="Jensen M.K."/>
            <person name="Elrod N.D."/>
            <person name="Chu H.F."/>
            <person name="Haseley M."/>
            <person name="Beam A.C."/>
            <person name="Huang K.L."/>
            <person name="Chiang W."/>
            <person name="Russell W.K."/>
            <person name="Williams K."/>
            <person name="Proschel C."/>
            <person name="Wagner E.J."/>
            <person name="Tong L."/>
        </authorList>
    </citation>
    <scope>FUNCTION</scope>
    <scope>SUBCELLULAR LOCATION</scope>
    <scope>DOMAIN</scope>
</reference>
<evidence type="ECO:0000269" key="1">
    <source>
    </source>
</evidence>
<evidence type="ECO:0000269" key="2">
    <source>
    </source>
</evidence>
<evidence type="ECO:0000305" key="3"/>
<evidence type="ECO:0000305" key="4">
    <source>
    </source>
</evidence>
<evidence type="ECO:0007744" key="5">
    <source>
    </source>
</evidence>
<keyword id="KW-0007">Acetylation</keyword>
<keyword id="KW-0963">Cytoplasm</keyword>
<keyword id="KW-1267">Proteomics identification</keyword>
<keyword id="KW-1185">Reference proteome</keyword>
<keyword id="KW-0808">Transferase</keyword>
<keyword id="KW-0832">Ubl conjugation</keyword>
<keyword id="KW-0833">Ubl conjugation pathway</keyword>
<comment type="function">
    <text evidence="1 2">E3 ubiquitin-protein ligase which accepts ubiquitin from specific E2 ubiquitin-conjugating enzymes, and transfers it to substrates, generally promoting their degradation by the proteasome (PubMed:15749827). Independently of its E3 ubiquitin-protein ligase activity, acts as an inhibitor of CPSF3 endonuclease activity by blocking CPSF3 active site (PubMed:39032490).</text>
</comment>
<comment type="catalytic activity">
    <reaction evidence="1">
        <text>S-ubiquitinyl-[E2 ubiquitin-conjugating enzyme]-L-cysteine + [acceptor protein]-L-lysine = [E2 ubiquitin-conjugating enzyme]-L-cysteine + N(6)-ubiquitinyl-[acceptor protein]-L-lysine.</text>
        <dbReference type="EC" id="2.3.2.26"/>
    </reaction>
</comment>
<comment type="pathway">
    <text evidence="1">Protein modification; protein ubiquitination.</text>
</comment>
<comment type="subunit">
    <text evidence="1">Interacts with UBE2C/UbcH10 (E2 ubiquitin-conjugating enzyme). In vitro, interacts with cyclin-B.</text>
</comment>
<comment type="interaction">
    <interactant intactId="EBI-9379147">
        <id>Q7Z6J8</id>
    </interactant>
    <interactant intactId="EBI-9392930">
        <id>Q9NVR5</id>
        <label>DNAAF2</label>
    </interactant>
    <organismsDiffer>false</organismsDiffer>
    <experiments>4</experiments>
</comment>
<comment type="interaction">
    <interactant intactId="EBI-9379147">
        <id>Q7Z6J8</id>
    </interactant>
    <interactant intactId="EBI-739552">
        <id>P43364</id>
        <label>MAGEA11</label>
    </interactant>
    <organismsDiffer>false</organismsDiffer>
    <experiments>3</experiments>
</comment>
<comment type="subcellular location">
    <subcellularLocation>
        <location evidence="2">Cytoplasm</location>
    </subcellularLocation>
</comment>
<comment type="domain">
    <text evidence="1">The C-terminal half (AA 188-389) is able to bind cyclin-B and shows a self-ubiquitination activity (mono-, poly, or multi-ubiquitination) in a HECT-like sequence dependent manner.</text>
</comment>
<comment type="domain">
    <text evidence="4">The BRAT1-like motif mediates inhibition of the endonuclease activity of CPSF3 by forming hyrogen bond and hydrophobic interactions with the active site of CPSF3: Cys-144 coordinates one of the two active site zinc ions of CPSF3.</text>
</comment>
<comment type="PTM">
    <text evidence="1">Ubiquitinated by UBCH10 (E2 ubiquitin-conjugating enzyme).</text>
</comment>
<comment type="sequence caution" evidence="3">
    <conflict type="erroneous initiation">
        <sequence resource="EMBL-CDS" id="AAH53645"/>
    </conflict>
</comment>
<accession>Q7Z6J8</accession>
<accession>B4DP63</accession>
<accession>Q5T4W2</accession>
<accession>Q6IPR4</accession>
<accession>Q75UG0</accession>
<accession>Q9NT42</accession>
<gene>
    <name type="primary">UBE3D</name>
    <name type="synonym">C6orf157</name>
    <name type="synonym">H10BH</name>
    <name type="synonym">UBE2CBP</name>
</gene>
<dbReference type="EC" id="2.3.2.26"/>
<dbReference type="EMBL" id="AB126062">
    <property type="protein sequence ID" value="BAD01604.1"/>
    <property type="molecule type" value="mRNA"/>
</dbReference>
<dbReference type="EMBL" id="AK298205">
    <property type="protein sequence ID" value="BAG60475.1"/>
    <property type="molecule type" value="mRNA"/>
</dbReference>
<dbReference type="EMBL" id="AL034377">
    <property type="status" value="NOT_ANNOTATED_CDS"/>
    <property type="molecule type" value="Genomic_DNA"/>
</dbReference>
<dbReference type="EMBL" id="AL139333">
    <property type="status" value="NOT_ANNOTATED_CDS"/>
    <property type="molecule type" value="Genomic_DNA"/>
</dbReference>
<dbReference type="EMBL" id="AL355613">
    <property type="status" value="NOT_ANNOTATED_CDS"/>
    <property type="molecule type" value="Genomic_DNA"/>
</dbReference>
<dbReference type="EMBL" id="AL357121">
    <property type="status" value="NOT_ANNOTATED_CDS"/>
    <property type="molecule type" value="Genomic_DNA"/>
</dbReference>
<dbReference type="EMBL" id="CH471051">
    <property type="protein sequence ID" value="EAW48681.1"/>
    <property type="molecule type" value="Genomic_DNA"/>
</dbReference>
<dbReference type="EMBL" id="BC053645">
    <property type="protein sequence ID" value="AAH53645.1"/>
    <property type="status" value="ALT_INIT"/>
    <property type="molecule type" value="mRNA"/>
</dbReference>
<dbReference type="EMBL" id="BC071763">
    <property type="protein sequence ID" value="AAH71763.1"/>
    <property type="molecule type" value="mRNA"/>
</dbReference>
<dbReference type="EMBL" id="BC101512">
    <property type="protein sequence ID" value="AAI01513.1"/>
    <property type="molecule type" value="mRNA"/>
</dbReference>
<dbReference type="EMBL" id="BC101538">
    <property type="protein sequence ID" value="AAI01539.1"/>
    <property type="molecule type" value="mRNA"/>
</dbReference>
<dbReference type="EMBL" id="AL137544">
    <property type="protein sequence ID" value="CAB70802.1"/>
    <property type="molecule type" value="mRNA"/>
</dbReference>
<dbReference type="CCDS" id="CCDS34491.1"/>
<dbReference type="PIR" id="T46387">
    <property type="entry name" value="T46387"/>
</dbReference>
<dbReference type="RefSeq" id="NP_001291366.1">
    <property type="nucleotide sequence ID" value="NM_001304437.1"/>
</dbReference>
<dbReference type="RefSeq" id="NP_944602.1">
    <property type="nucleotide sequence ID" value="NM_198920.3"/>
</dbReference>
<dbReference type="BioGRID" id="124656">
    <property type="interactions" value="41"/>
</dbReference>
<dbReference type="FunCoup" id="Q7Z6J8">
    <property type="interactions" value="1451"/>
</dbReference>
<dbReference type="IntAct" id="Q7Z6J8">
    <property type="interactions" value="26"/>
</dbReference>
<dbReference type="MINT" id="Q7Z6J8"/>
<dbReference type="STRING" id="9606.ENSP00000358762"/>
<dbReference type="GlyGen" id="Q7Z6J8">
    <property type="glycosylation" value="1 site, 1 O-linked glycan (1 site)"/>
</dbReference>
<dbReference type="iPTMnet" id="Q7Z6J8"/>
<dbReference type="PhosphoSitePlus" id="Q7Z6J8"/>
<dbReference type="BioMuta" id="UBE3D"/>
<dbReference type="DMDM" id="160395569"/>
<dbReference type="jPOST" id="Q7Z6J8"/>
<dbReference type="MassIVE" id="Q7Z6J8"/>
<dbReference type="PaxDb" id="9606-ENSP00000358762"/>
<dbReference type="PeptideAtlas" id="Q7Z6J8"/>
<dbReference type="ProteomicsDB" id="69428"/>
<dbReference type="Pumba" id="Q7Z6J8"/>
<dbReference type="Antibodypedia" id="18484">
    <property type="antibodies" value="10 antibodies from 8 providers"/>
</dbReference>
<dbReference type="DNASU" id="90025"/>
<dbReference type="Ensembl" id="ENST00000369747.8">
    <property type="protein sequence ID" value="ENSP00000358762.3"/>
    <property type="gene ID" value="ENSG00000118420.17"/>
</dbReference>
<dbReference type="GeneID" id="90025"/>
<dbReference type="KEGG" id="hsa:90025"/>
<dbReference type="MANE-Select" id="ENST00000369747.8">
    <property type="protein sequence ID" value="ENSP00000358762.3"/>
    <property type="RefSeq nucleotide sequence ID" value="NM_198920.3"/>
    <property type="RefSeq protein sequence ID" value="NP_944602.1"/>
</dbReference>
<dbReference type="UCSC" id="uc003pjp.4">
    <property type="organism name" value="human"/>
</dbReference>
<dbReference type="AGR" id="HGNC:21381"/>
<dbReference type="CTD" id="90025"/>
<dbReference type="DisGeNET" id="90025"/>
<dbReference type="GeneCards" id="UBE3D"/>
<dbReference type="HGNC" id="HGNC:21381">
    <property type="gene designation" value="UBE3D"/>
</dbReference>
<dbReference type="HPA" id="ENSG00000118420">
    <property type="expression patterns" value="Low tissue specificity"/>
</dbReference>
<dbReference type="MIM" id="612495">
    <property type="type" value="gene"/>
</dbReference>
<dbReference type="neXtProt" id="NX_Q7Z6J8"/>
<dbReference type="OpenTargets" id="ENSG00000118420"/>
<dbReference type="PharmGKB" id="PA162407873"/>
<dbReference type="VEuPathDB" id="HostDB:ENSG00000118420"/>
<dbReference type="eggNOG" id="KOG4784">
    <property type="taxonomic scope" value="Eukaryota"/>
</dbReference>
<dbReference type="GeneTree" id="ENSGT00390000003986"/>
<dbReference type="HOGENOM" id="CLU_060972_0_0_1"/>
<dbReference type="InParanoid" id="Q7Z6J8"/>
<dbReference type="OMA" id="DCFTGDS"/>
<dbReference type="OrthoDB" id="66510at2759"/>
<dbReference type="PAN-GO" id="Q7Z6J8">
    <property type="GO annotations" value="10 GO annotations based on evolutionary models"/>
</dbReference>
<dbReference type="PhylomeDB" id="Q7Z6J8"/>
<dbReference type="TreeFam" id="TF324684"/>
<dbReference type="PathwayCommons" id="Q7Z6J8"/>
<dbReference type="Reactome" id="R-HSA-983168">
    <property type="pathway name" value="Antigen processing: Ubiquitination &amp; Proteasome degradation"/>
</dbReference>
<dbReference type="SignaLink" id="Q7Z6J8"/>
<dbReference type="UniPathway" id="UPA00143"/>
<dbReference type="BioGRID-ORCS" id="90025">
    <property type="hits" value="144 hits in 1211 CRISPR screens"/>
</dbReference>
<dbReference type="ChiTaRS" id="UBE3D">
    <property type="organism name" value="human"/>
</dbReference>
<dbReference type="GenomeRNAi" id="90025"/>
<dbReference type="Pharos" id="Q7Z6J8">
    <property type="development level" value="Tbio"/>
</dbReference>
<dbReference type="PRO" id="PR:Q7Z6J8"/>
<dbReference type="Proteomes" id="UP000005640">
    <property type="component" value="Chromosome 6"/>
</dbReference>
<dbReference type="RNAct" id="Q7Z6J8">
    <property type="molecule type" value="protein"/>
</dbReference>
<dbReference type="Bgee" id="ENSG00000118420">
    <property type="expression patterns" value="Expressed in buccal mucosa cell and 158 other cell types or tissues"/>
</dbReference>
<dbReference type="ExpressionAtlas" id="Q7Z6J8">
    <property type="expression patterns" value="baseline and differential"/>
</dbReference>
<dbReference type="GO" id="GO:0005829">
    <property type="term" value="C:cytosol"/>
    <property type="evidence" value="ECO:0000314"/>
    <property type="project" value="FlyBase"/>
</dbReference>
<dbReference type="GO" id="GO:0005634">
    <property type="term" value="C:nucleus"/>
    <property type="evidence" value="ECO:0000318"/>
    <property type="project" value="GO_Central"/>
</dbReference>
<dbReference type="GO" id="GO:0000151">
    <property type="term" value="C:ubiquitin ligase complex"/>
    <property type="evidence" value="ECO:0000314"/>
    <property type="project" value="UniProtKB"/>
</dbReference>
<dbReference type="GO" id="GO:0030332">
    <property type="term" value="F:cyclin binding"/>
    <property type="evidence" value="ECO:0000353"/>
    <property type="project" value="UniProtKB"/>
</dbReference>
<dbReference type="GO" id="GO:0008428">
    <property type="term" value="F:ribonuclease inhibitor activity"/>
    <property type="evidence" value="ECO:0000314"/>
    <property type="project" value="UniProtKB"/>
</dbReference>
<dbReference type="GO" id="GO:0031624">
    <property type="term" value="F:ubiquitin conjugating enzyme binding"/>
    <property type="evidence" value="ECO:0000318"/>
    <property type="project" value="GO_Central"/>
</dbReference>
<dbReference type="GO" id="GO:0061630">
    <property type="term" value="F:ubiquitin protein ligase activity"/>
    <property type="evidence" value="ECO:0000314"/>
    <property type="project" value="UniProtKB"/>
</dbReference>
<dbReference type="GO" id="GO:0044390">
    <property type="term" value="F:ubiquitin-like protein conjugating enzyme binding"/>
    <property type="evidence" value="ECO:0000353"/>
    <property type="project" value="UniProtKB"/>
</dbReference>
<dbReference type="GO" id="GO:0043161">
    <property type="term" value="P:proteasome-mediated ubiquitin-dependent protein catabolic process"/>
    <property type="evidence" value="ECO:0000318"/>
    <property type="project" value="GO_Central"/>
</dbReference>
<dbReference type="GO" id="GO:0051865">
    <property type="term" value="P:protein autoubiquitination"/>
    <property type="evidence" value="ECO:0000314"/>
    <property type="project" value="UniProtKB"/>
</dbReference>
<dbReference type="GO" id="GO:0006513">
    <property type="term" value="P:protein monoubiquitination"/>
    <property type="evidence" value="ECO:0000314"/>
    <property type="project" value="UniProtKB"/>
</dbReference>
<dbReference type="GO" id="GO:0000209">
    <property type="term" value="P:protein polyubiquitination"/>
    <property type="evidence" value="ECO:0000314"/>
    <property type="project" value="UniProtKB"/>
</dbReference>
<dbReference type="InterPro" id="IPR019193">
    <property type="entry name" value="UBQ-conj_enz_E2-bd_prot"/>
</dbReference>
<dbReference type="PANTHER" id="PTHR31531:SF2">
    <property type="entry name" value="E3 UBIQUITIN-PROTEIN LIGASE E3D"/>
    <property type="match status" value="1"/>
</dbReference>
<dbReference type="PANTHER" id="PTHR31531">
    <property type="entry name" value="E3 UBIQUITIN-PROTEIN LIGASE E3D FAMILY MEMBER"/>
    <property type="match status" value="1"/>
</dbReference>
<dbReference type="Pfam" id="PF09814">
    <property type="entry name" value="HECT_2"/>
    <property type="match status" value="1"/>
</dbReference>
<name>UBE3D_HUMAN</name>
<sequence length="389" mass="43657">MAASAAETRVFLEVRGQLQSALLILGEPKEGGMPMNISIMPSSLQMKTPEGCTEIQLPAEVRLVPSSCRGLQFVVGDGLHLRLQTQAKLGTKLISMFNQSSQTQECCTFYCQSCGEVIIKDRKLLRVLPLPSENWGALVGEWCCHPDPFANKSLHPQENDCFIGDSFFLVNLRTSLWQQRPELSPVEMCCVSSDNHCKLEPKANTKVICKRCKVMLGETVSSETTKFYMTEIIIQSSERSFPIIPRSWFVQSVIAQCLVQLSSARSTFRFTIQGQDDKVYILLWLLNSDSLVIESLRNSKYIKKFPLLENTFKADSSSAWSAVKVLYQPCIKSRNEKLVSLWESDISVHPLTLPSATCLELLLILSKSNANLPSSLRRVNSFQVAFLKM</sequence>
<feature type="initiator methionine" description="Removed" evidence="5">
    <location>
        <position position="1"/>
    </location>
</feature>
<feature type="chain" id="PRO_0000311190" description="E3 ubiquitin-protein ligase E3D">
    <location>
        <begin position="2"/>
        <end position="389"/>
    </location>
</feature>
<feature type="region of interest" description="Interaction with UBE2C" evidence="1">
    <location>
        <begin position="235"/>
        <end position="257"/>
    </location>
</feature>
<feature type="region of interest" description="HECT-like">
    <location>
        <begin position="353"/>
        <end position="389"/>
    </location>
</feature>
<feature type="short sequence motif" description="BRAT1-like motif" evidence="4">
    <location>
        <begin position="129"/>
        <end position="159"/>
    </location>
</feature>
<feature type="binding site" evidence="4">
    <location>
        <position position="144"/>
    </location>
    <ligand>
        <name>Zn(2+)</name>
        <dbReference type="ChEBI" id="CHEBI:29105"/>
    </ligand>
</feature>
<feature type="modified residue" description="N-acetylalanine" evidence="5">
    <location>
        <position position="2"/>
    </location>
</feature>
<feature type="sequence variant" id="VAR_037152" description="In dbSNP:rs12528542.">
    <original>T</original>
    <variation>P</variation>
    <location>
        <position position="174"/>
    </location>
</feature>
<feature type="sequence variant" id="VAR_037153" description="In dbSNP:rs7739323.">
    <original>V</original>
    <variation>M</variation>
    <location>
        <position position="379"/>
    </location>
</feature>
<feature type="sequence conflict" description="In Ref. 6; CAB70802." evidence="3" ref="6">
    <original>ETTK</original>
    <variation>ARSC</variation>
    <location>
        <begin position="223"/>
        <end position="226"/>
    </location>
</feature>
<feature type="sequence conflict" description="In Ref. 5; AAH71763." evidence="3" ref="5">
    <original>S</original>
    <variation>G</variation>
    <location>
        <position position="340"/>
    </location>
</feature>
<proteinExistence type="evidence at protein level"/>
<organism>
    <name type="scientific">Homo sapiens</name>
    <name type="common">Human</name>
    <dbReference type="NCBI Taxonomy" id="9606"/>
    <lineage>
        <taxon>Eukaryota</taxon>
        <taxon>Metazoa</taxon>
        <taxon>Chordata</taxon>
        <taxon>Craniata</taxon>
        <taxon>Vertebrata</taxon>
        <taxon>Euteleostomi</taxon>
        <taxon>Mammalia</taxon>
        <taxon>Eutheria</taxon>
        <taxon>Euarchontoglires</taxon>
        <taxon>Primates</taxon>
        <taxon>Haplorrhini</taxon>
        <taxon>Catarrhini</taxon>
        <taxon>Hominidae</taxon>
        <taxon>Homo</taxon>
    </lineage>
</organism>
<protein>
    <recommendedName>
        <fullName>E3 ubiquitin-protein ligase E3D</fullName>
        <ecNumber>2.3.2.26</ecNumber>
    </recommendedName>
    <alternativeName>
        <fullName evidence="3">HECT-type E3 ubiquitin transferase E3D</fullName>
    </alternativeName>
    <alternativeName>
        <fullName>UbcH10-binding protein with a HECT-like domain</fullName>
    </alternativeName>
    <alternativeName>
        <fullName>Ubiquitin-conjugating enzyme E2C-binding protein</fullName>
    </alternativeName>
</protein>